<gene>
    <name evidence="1" type="primary">apt</name>
    <name type="ordered locus">HP_0572</name>
</gene>
<feature type="chain" id="PRO_0000149394" description="Adenine phosphoribosyltransferase">
    <location>
        <begin position="1"/>
        <end position="179"/>
    </location>
</feature>
<proteinExistence type="inferred from homology"/>
<name>APT_HELPY</name>
<evidence type="ECO:0000255" key="1">
    <source>
        <dbReference type="HAMAP-Rule" id="MF_00004"/>
    </source>
</evidence>
<keyword id="KW-0963">Cytoplasm</keyword>
<keyword id="KW-0328">Glycosyltransferase</keyword>
<keyword id="KW-0660">Purine salvage</keyword>
<keyword id="KW-1185">Reference proteome</keyword>
<keyword id="KW-0808">Transferase</keyword>
<protein>
    <recommendedName>
        <fullName evidence="1">Adenine phosphoribosyltransferase</fullName>
        <shortName evidence="1">APRT</shortName>
        <ecNumber evidence="1">2.4.2.7</ecNumber>
    </recommendedName>
</protein>
<comment type="function">
    <text evidence="1">Catalyzes a salvage reaction resulting in the formation of AMP, that is energically less costly than de novo synthesis.</text>
</comment>
<comment type="catalytic activity">
    <reaction evidence="1">
        <text>AMP + diphosphate = 5-phospho-alpha-D-ribose 1-diphosphate + adenine</text>
        <dbReference type="Rhea" id="RHEA:16609"/>
        <dbReference type="ChEBI" id="CHEBI:16708"/>
        <dbReference type="ChEBI" id="CHEBI:33019"/>
        <dbReference type="ChEBI" id="CHEBI:58017"/>
        <dbReference type="ChEBI" id="CHEBI:456215"/>
        <dbReference type="EC" id="2.4.2.7"/>
    </reaction>
</comment>
<comment type="pathway">
    <text evidence="1">Purine metabolism; AMP biosynthesis via salvage pathway; AMP from adenine: step 1/1.</text>
</comment>
<comment type="subunit">
    <text evidence="1">Homodimer.</text>
</comment>
<comment type="subcellular location">
    <subcellularLocation>
        <location evidence="1">Cytoplasm</location>
    </subcellularLocation>
</comment>
<comment type="similarity">
    <text evidence="1">Belongs to the purine/pyrimidine phosphoribosyltransferase family.</text>
</comment>
<accession>O25296</accession>
<dbReference type="EC" id="2.4.2.7" evidence="1"/>
<dbReference type="EMBL" id="AE000511">
    <property type="protein sequence ID" value="AAD07640.1"/>
    <property type="molecule type" value="Genomic_DNA"/>
</dbReference>
<dbReference type="PIR" id="D64591">
    <property type="entry name" value="D64591"/>
</dbReference>
<dbReference type="RefSeq" id="NP_207367.1">
    <property type="nucleotide sequence ID" value="NC_000915.1"/>
</dbReference>
<dbReference type="RefSeq" id="WP_001006135.1">
    <property type="nucleotide sequence ID" value="NC_018939.1"/>
</dbReference>
<dbReference type="SMR" id="O25296"/>
<dbReference type="FunCoup" id="O25296">
    <property type="interactions" value="270"/>
</dbReference>
<dbReference type="IntAct" id="O25296">
    <property type="interactions" value="2"/>
</dbReference>
<dbReference type="STRING" id="85962.HP_0572"/>
<dbReference type="PaxDb" id="85962-C694_02950"/>
<dbReference type="EnsemblBacteria" id="AAD07640">
    <property type="protein sequence ID" value="AAD07640"/>
    <property type="gene ID" value="HP_0572"/>
</dbReference>
<dbReference type="KEGG" id="heo:C694_02950"/>
<dbReference type="KEGG" id="hpy:HP_0572"/>
<dbReference type="PATRIC" id="fig|85962.47.peg.617"/>
<dbReference type="eggNOG" id="COG0503">
    <property type="taxonomic scope" value="Bacteria"/>
</dbReference>
<dbReference type="InParanoid" id="O25296"/>
<dbReference type="OrthoDB" id="9803963at2"/>
<dbReference type="PhylomeDB" id="O25296"/>
<dbReference type="UniPathway" id="UPA00588">
    <property type="reaction ID" value="UER00646"/>
</dbReference>
<dbReference type="Proteomes" id="UP000000429">
    <property type="component" value="Chromosome"/>
</dbReference>
<dbReference type="GO" id="GO:0005737">
    <property type="term" value="C:cytoplasm"/>
    <property type="evidence" value="ECO:0000318"/>
    <property type="project" value="GO_Central"/>
</dbReference>
<dbReference type="GO" id="GO:0002055">
    <property type="term" value="F:adenine binding"/>
    <property type="evidence" value="ECO:0000318"/>
    <property type="project" value="GO_Central"/>
</dbReference>
<dbReference type="GO" id="GO:0003999">
    <property type="term" value="F:adenine phosphoribosyltransferase activity"/>
    <property type="evidence" value="ECO:0000318"/>
    <property type="project" value="GO_Central"/>
</dbReference>
<dbReference type="GO" id="GO:0016208">
    <property type="term" value="F:AMP binding"/>
    <property type="evidence" value="ECO:0000318"/>
    <property type="project" value="GO_Central"/>
</dbReference>
<dbReference type="GO" id="GO:0006168">
    <property type="term" value="P:adenine salvage"/>
    <property type="evidence" value="ECO:0000318"/>
    <property type="project" value="GO_Central"/>
</dbReference>
<dbReference type="GO" id="GO:0044209">
    <property type="term" value="P:AMP salvage"/>
    <property type="evidence" value="ECO:0000318"/>
    <property type="project" value="GO_Central"/>
</dbReference>
<dbReference type="GO" id="GO:0006166">
    <property type="term" value="P:purine ribonucleoside salvage"/>
    <property type="evidence" value="ECO:0007669"/>
    <property type="project" value="UniProtKB-KW"/>
</dbReference>
<dbReference type="CDD" id="cd06223">
    <property type="entry name" value="PRTases_typeI"/>
    <property type="match status" value="1"/>
</dbReference>
<dbReference type="FunFam" id="3.40.50.2020:FF:000021">
    <property type="entry name" value="Adenine phosphoribosyltransferase"/>
    <property type="match status" value="1"/>
</dbReference>
<dbReference type="Gene3D" id="3.40.50.2020">
    <property type="match status" value="1"/>
</dbReference>
<dbReference type="HAMAP" id="MF_00004">
    <property type="entry name" value="Aden_phosphoribosyltr"/>
    <property type="match status" value="1"/>
</dbReference>
<dbReference type="InterPro" id="IPR005764">
    <property type="entry name" value="Ade_phspho_trans"/>
</dbReference>
<dbReference type="InterPro" id="IPR000836">
    <property type="entry name" value="PRibTrfase_dom"/>
</dbReference>
<dbReference type="InterPro" id="IPR029057">
    <property type="entry name" value="PRTase-like"/>
</dbReference>
<dbReference type="InterPro" id="IPR050054">
    <property type="entry name" value="UPRTase/APRTase"/>
</dbReference>
<dbReference type="NCBIfam" id="TIGR01090">
    <property type="entry name" value="apt"/>
    <property type="match status" value="1"/>
</dbReference>
<dbReference type="NCBIfam" id="NF002634">
    <property type="entry name" value="PRK02304.1-3"/>
    <property type="match status" value="1"/>
</dbReference>
<dbReference type="NCBIfam" id="NF002636">
    <property type="entry name" value="PRK02304.1-5"/>
    <property type="match status" value="1"/>
</dbReference>
<dbReference type="PANTHER" id="PTHR32315">
    <property type="entry name" value="ADENINE PHOSPHORIBOSYLTRANSFERASE"/>
    <property type="match status" value="1"/>
</dbReference>
<dbReference type="PANTHER" id="PTHR32315:SF3">
    <property type="entry name" value="ADENINE PHOSPHORIBOSYLTRANSFERASE"/>
    <property type="match status" value="1"/>
</dbReference>
<dbReference type="Pfam" id="PF00156">
    <property type="entry name" value="Pribosyltran"/>
    <property type="match status" value="1"/>
</dbReference>
<dbReference type="SUPFAM" id="SSF53271">
    <property type="entry name" value="PRTase-like"/>
    <property type="match status" value="1"/>
</dbReference>
<dbReference type="PROSITE" id="PS00103">
    <property type="entry name" value="PUR_PYR_PR_TRANSFER"/>
    <property type="match status" value="1"/>
</dbReference>
<sequence length="179" mass="19845">MNETLKEELLQSIREVKDYPKKGILFKDITTLLNYPKLFNKLIDTLKKRYLALNIDFIVGIEARGFILGSALAYALGVGFVPVRKKGKLPAHTLSQSYSLEYGSDSIEIHSDAFRGIKGVRVVLIDDLLATGGTALASLELIKALQAECIEACFLIGLKELPGIQLLEERVKTFCLLEC</sequence>
<organism>
    <name type="scientific">Helicobacter pylori (strain ATCC 700392 / 26695)</name>
    <name type="common">Campylobacter pylori</name>
    <dbReference type="NCBI Taxonomy" id="85962"/>
    <lineage>
        <taxon>Bacteria</taxon>
        <taxon>Pseudomonadati</taxon>
        <taxon>Campylobacterota</taxon>
        <taxon>Epsilonproteobacteria</taxon>
        <taxon>Campylobacterales</taxon>
        <taxon>Helicobacteraceae</taxon>
        <taxon>Helicobacter</taxon>
    </lineage>
</organism>
<reference key="1">
    <citation type="journal article" date="1997" name="Nature">
        <title>The complete genome sequence of the gastric pathogen Helicobacter pylori.</title>
        <authorList>
            <person name="Tomb J.-F."/>
            <person name="White O."/>
            <person name="Kerlavage A.R."/>
            <person name="Clayton R.A."/>
            <person name="Sutton G.G."/>
            <person name="Fleischmann R.D."/>
            <person name="Ketchum K.A."/>
            <person name="Klenk H.-P."/>
            <person name="Gill S.R."/>
            <person name="Dougherty B.A."/>
            <person name="Nelson K.E."/>
            <person name="Quackenbush J."/>
            <person name="Zhou L."/>
            <person name="Kirkness E.F."/>
            <person name="Peterson S.N."/>
            <person name="Loftus B.J."/>
            <person name="Richardson D.L."/>
            <person name="Dodson R.J."/>
            <person name="Khalak H.G."/>
            <person name="Glodek A."/>
            <person name="McKenney K."/>
            <person name="FitzGerald L.M."/>
            <person name="Lee N."/>
            <person name="Adams M.D."/>
            <person name="Hickey E.K."/>
            <person name="Berg D.E."/>
            <person name="Gocayne J.D."/>
            <person name="Utterback T.R."/>
            <person name="Peterson J.D."/>
            <person name="Kelley J.M."/>
            <person name="Cotton M.D."/>
            <person name="Weidman J.F."/>
            <person name="Fujii C."/>
            <person name="Bowman C."/>
            <person name="Watthey L."/>
            <person name="Wallin E."/>
            <person name="Hayes W.S."/>
            <person name="Borodovsky M."/>
            <person name="Karp P.D."/>
            <person name="Smith H.O."/>
            <person name="Fraser C.M."/>
            <person name="Venter J.C."/>
        </authorList>
    </citation>
    <scope>NUCLEOTIDE SEQUENCE [LARGE SCALE GENOMIC DNA]</scope>
    <source>
        <strain>ATCC 700392 / 26695</strain>
    </source>
</reference>